<organism>
    <name type="scientific">Aquifex aeolicus (strain VF5)</name>
    <dbReference type="NCBI Taxonomy" id="224324"/>
    <lineage>
        <taxon>Bacteria</taxon>
        <taxon>Pseudomonadati</taxon>
        <taxon>Aquificota</taxon>
        <taxon>Aquificia</taxon>
        <taxon>Aquificales</taxon>
        <taxon>Aquificaceae</taxon>
        <taxon>Aquifex</taxon>
    </lineage>
</organism>
<name>ILVC_AQUAE</name>
<protein>
    <recommendedName>
        <fullName evidence="1">Ketol-acid reductoisomerase (NADP(+))</fullName>
        <shortName evidence="1">KARI</shortName>
        <ecNumber evidence="1">1.1.1.86</ecNumber>
    </recommendedName>
    <alternativeName>
        <fullName evidence="1">Acetohydroxy-acid isomeroreductase</fullName>
        <shortName evidence="1">AHIR</shortName>
    </alternativeName>
    <alternativeName>
        <fullName evidence="1">Alpha-keto-beta-hydroxylacyl reductoisomerase</fullName>
    </alternativeName>
    <alternativeName>
        <fullName evidence="1">Ketol-acid reductoisomerase type 1</fullName>
    </alternativeName>
    <alternativeName>
        <fullName evidence="1">Ketol-acid reductoisomerase type I</fullName>
    </alternativeName>
</protein>
<proteinExistence type="inferred from homology"/>
<keyword id="KW-0028">Amino-acid biosynthesis</keyword>
<keyword id="KW-0100">Branched-chain amino acid biosynthesis</keyword>
<keyword id="KW-0460">Magnesium</keyword>
<keyword id="KW-0479">Metal-binding</keyword>
<keyword id="KW-0521">NADP</keyword>
<keyword id="KW-0560">Oxidoreductase</keyword>
<keyword id="KW-1185">Reference proteome</keyword>
<gene>
    <name evidence="1" type="primary">ilvC</name>
    <name type="ordered locus">aq_1245</name>
</gene>
<feature type="chain" id="PRO_0000151269" description="Ketol-acid reductoisomerase (NADP(+))">
    <location>
        <begin position="1"/>
        <end position="333"/>
    </location>
</feature>
<feature type="domain" description="KARI N-terminal Rossmann" evidence="2">
    <location>
        <begin position="2"/>
        <end position="182"/>
    </location>
</feature>
<feature type="domain" description="KARI C-terminal knotted" evidence="3">
    <location>
        <begin position="183"/>
        <end position="327"/>
    </location>
</feature>
<feature type="active site" evidence="1">
    <location>
        <position position="108"/>
    </location>
</feature>
<feature type="binding site" evidence="1">
    <location>
        <begin position="25"/>
        <end position="28"/>
    </location>
    <ligand>
        <name>NADP(+)</name>
        <dbReference type="ChEBI" id="CHEBI:58349"/>
    </ligand>
</feature>
<feature type="binding site" evidence="1">
    <location>
        <position position="51"/>
    </location>
    <ligand>
        <name>NADP(+)</name>
        <dbReference type="ChEBI" id="CHEBI:58349"/>
    </ligand>
</feature>
<feature type="binding site" evidence="1">
    <location>
        <position position="53"/>
    </location>
    <ligand>
        <name>NADP(+)</name>
        <dbReference type="ChEBI" id="CHEBI:58349"/>
    </ligand>
</feature>
<feature type="binding site" evidence="1">
    <location>
        <begin position="83"/>
        <end position="86"/>
    </location>
    <ligand>
        <name>NADP(+)</name>
        <dbReference type="ChEBI" id="CHEBI:58349"/>
    </ligand>
</feature>
<feature type="binding site" evidence="1">
    <location>
        <position position="134"/>
    </location>
    <ligand>
        <name>NADP(+)</name>
        <dbReference type="ChEBI" id="CHEBI:58349"/>
    </ligand>
</feature>
<feature type="binding site" evidence="1">
    <location>
        <position position="191"/>
    </location>
    <ligand>
        <name>Mg(2+)</name>
        <dbReference type="ChEBI" id="CHEBI:18420"/>
        <label>1</label>
    </ligand>
</feature>
<feature type="binding site" evidence="1">
    <location>
        <position position="191"/>
    </location>
    <ligand>
        <name>Mg(2+)</name>
        <dbReference type="ChEBI" id="CHEBI:18420"/>
        <label>2</label>
    </ligand>
</feature>
<feature type="binding site" evidence="1">
    <location>
        <position position="195"/>
    </location>
    <ligand>
        <name>Mg(2+)</name>
        <dbReference type="ChEBI" id="CHEBI:18420"/>
        <label>1</label>
    </ligand>
</feature>
<feature type="binding site" evidence="1">
    <location>
        <position position="227"/>
    </location>
    <ligand>
        <name>Mg(2+)</name>
        <dbReference type="ChEBI" id="CHEBI:18420"/>
        <label>2</label>
    </ligand>
</feature>
<feature type="binding site" evidence="1">
    <location>
        <position position="231"/>
    </location>
    <ligand>
        <name>Mg(2+)</name>
        <dbReference type="ChEBI" id="CHEBI:18420"/>
        <label>2</label>
    </ligand>
</feature>
<feature type="binding site" evidence="1">
    <location>
        <position position="252"/>
    </location>
    <ligand>
        <name>substrate</name>
    </ligand>
</feature>
<reference key="1">
    <citation type="journal article" date="1998" name="Nature">
        <title>The complete genome of the hyperthermophilic bacterium Aquifex aeolicus.</title>
        <authorList>
            <person name="Deckert G."/>
            <person name="Warren P.V."/>
            <person name="Gaasterland T."/>
            <person name="Young W.G."/>
            <person name="Lenox A.L."/>
            <person name="Graham D.E."/>
            <person name="Overbeek R."/>
            <person name="Snead M.A."/>
            <person name="Keller M."/>
            <person name="Aujay M."/>
            <person name="Huber R."/>
            <person name="Feldman R.A."/>
            <person name="Short J.M."/>
            <person name="Olsen G.J."/>
            <person name="Swanson R.V."/>
        </authorList>
    </citation>
    <scope>NUCLEOTIDE SEQUENCE [LARGE SCALE GENOMIC DNA]</scope>
    <source>
        <strain>VF5</strain>
    </source>
</reference>
<evidence type="ECO:0000255" key="1">
    <source>
        <dbReference type="HAMAP-Rule" id="MF_00435"/>
    </source>
</evidence>
<evidence type="ECO:0000255" key="2">
    <source>
        <dbReference type="PROSITE-ProRule" id="PRU01197"/>
    </source>
</evidence>
<evidence type="ECO:0000255" key="3">
    <source>
        <dbReference type="PROSITE-ProRule" id="PRU01198"/>
    </source>
</evidence>
<accession>O67289</accession>
<comment type="function">
    <text evidence="1">Involved in the biosynthesis of branched-chain amino acids (BCAA). Catalyzes an alkyl-migration followed by a ketol-acid reduction of (S)-2-acetolactate (S2AL) to yield (R)-2,3-dihydroxy-isovalerate. In the isomerase reaction, S2AL is rearranged via a Mg-dependent methyl migration to produce 3-hydroxy-3-methyl-2-ketobutyrate (HMKB). In the reductase reaction, this 2-ketoacid undergoes a metal-dependent reduction by NADPH to yield (R)-2,3-dihydroxy-isovalerate.</text>
</comment>
<comment type="catalytic activity">
    <reaction evidence="1">
        <text>(2R)-2,3-dihydroxy-3-methylbutanoate + NADP(+) = (2S)-2-acetolactate + NADPH + H(+)</text>
        <dbReference type="Rhea" id="RHEA:22068"/>
        <dbReference type="ChEBI" id="CHEBI:15378"/>
        <dbReference type="ChEBI" id="CHEBI:49072"/>
        <dbReference type="ChEBI" id="CHEBI:57783"/>
        <dbReference type="ChEBI" id="CHEBI:58349"/>
        <dbReference type="ChEBI" id="CHEBI:58476"/>
        <dbReference type="EC" id="1.1.1.86"/>
    </reaction>
</comment>
<comment type="catalytic activity">
    <reaction evidence="1">
        <text>(2R,3R)-2,3-dihydroxy-3-methylpentanoate + NADP(+) = (S)-2-ethyl-2-hydroxy-3-oxobutanoate + NADPH + H(+)</text>
        <dbReference type="Rhea" id="RHEA:13493"/>
        <dbReference type="ChEBI" id="CHEBI:15378"/>
        <dbReference type="ChEBI" id="CHEBI:49256"/>
        <dbReference type="ChEBI" id="CHEBI:49258"/>
        <dbReference type="ChEBI" id="CHEBI:57783"/>
        <dbReference type="ChEBI" id="CHEBI:58349"/>
        <dbReference type="EC" id="1.1.1.86"/>
    </reaction>
</comment>
<comment type="cofactor">
    <cofactor evidence="1">
        <name>Mg(2+)</name>
        <dbReference type="ChEBI" id="CHEBI:18420"/>
    </cofactor>
    <text evidence="1">Binds 2 magnesium ions per subunit.</text>
</comment>
<comment type="pathway">
    <text evidence="1">Amino-acid biosynthesis; L-isoleucine biosynthesis; L-isoleucine from 2-oxobutanoate: step 2/4.</text>
</comment>
<comment type="pathway">
    <text evidence="1">Amino-acid biosynthesis; L-valine biosynthesis; L-valine from pyruvate: step 2/4.</text>
</comment>
<comment type="similarity">
    <text evidence="1">Belongs to the ketol-acid reductoisomerase family.</text>
</comment>
<dbReference type="EC" id="1.1.1.86" evidence="1"/>
<dbReference type="EMBL" id="AE000657">
    <property type="protein sequence ID" value="AAC07240.1"/>
    <property type="molecule type" value="Genomic_DNA"/>
</dbReference>
<dbReference type="PIR" id="F70407">
    <property type="entry name" value="F70407"/>
</dbReference>
<dbReference type="RefSeq" id="NP_213853.1">
    <property type="nucleotide sequence ID" value="NC_000918.1"/>
</dbReference>
<dbReference type="RefSeq" id="WP_010880791.1">
    <property type="nucleotide sequence ID" value="NC_000918.1"/>
</dbReference>
<dbReference type="SMR" id="O67289"/>
<dbReference type="FunCoup" id="O67289">
    <property type="interactions" value="430"/>
</dbReference>
<dbReference type="STRING" id="224324.aq_1245"/>
<dbReference type="EnsemblBacteria" id="AAC07240">
    <property type="protein sequence ID" value="AAC07240"/>
    <property type="gene ID" value="aq_1245"/>
</dbReference>
<dbReference type="KEGG" id="aae:aq_1245"/>
<dbReference type="PATRIC" id="fig|224324.8.peg.970"/>
<dbReference type="eggNOG" id="COG0059">
    <property type="taxonomic scope" value="Bacteria"/>
</dbReference>
<dbReference type="HOGENOM" id="CLU_033821_0_1_0"/>
<dbReference type="InParanoid" id="O67289"/>
<dbReference type="OrthoDB" id="9804088at2"/>
<dbReference type="UniPathway" id="UPA00047">
    <property type="reaction ID" value="UER00056"/>
</dbReference>
<dbReference type="UniPathway" id="UPA00049">
    <property type="reaction ID" value="UER00060"/>
</dbReference>
<dbReference type="Proteomes" id="UP000000798">
    <property type="component" value="Chromosome"/>
</dbReference>
<dbReference type="GO" id="GO:0005829">
    <property type="term" value="C:cytosol"/>
    <property type="evidence" value="ECO:0000318"/>
    <property type="project" value="GO_Central"/>
</dbReference>
<dbReference type="GO" id="GO:0004455">
    <property type="term" value="F:ketol-acid reductoisomerase activity"/>
    <property type="evidence" value="ECO:0000318"/>
    <property type="project" value="GO_Central"/>
</dbReference>
<dbReference type="GO" id="GO:0000287">
    <property type="term" value="F:magnesium ion binding"/>
    <property type="evidence" value="ECO:0007669"/>
    <property type="project" value="UniProtKB-UniRule"/>
</dbReference>
<dbReference type="GO" id="GO:0050661">
    <property type="term" value="F:NADP binding"/>
    <property type="evidence" value="ECO:0007669"/>
    <property type="project" value="InterPro"/>
</dbReference>
<dbReference type="GO" id="GO:0009097">
    <property type="term" value="P:isoleucine biosynthetic process"/>
    <property type="evidence" value="ECO:0000318"/>
    <property type="project" value="GO_Central"/>
</dbReference>
<dbReference type="GO" id="GO:0009099">
    <property type="term" value="P:L-valine biosynthetic process"/>
    <property type="evidence" value="ECO:0000318"/>
    <property type="project" value="GO_Central"/>
</dbReference>
<dbReference type="FunFam" id="3.40.50.720:FF:000023">
    <property type="entry name" value="Ketol-acid reductoisomerase (NADP(+))"/>
    <property type="match status" value="1"/>
</dbReference>
<dbReference type="Gene3D" id="6.10.240.10">
    <property type="match status" value="1"/>
</dbReference>
<dbReference type="Gene3D" id="3.40.50.720">
    <property type="entry name" value="NAD(P)-binding Rossmann-like Domain"/>
    <property type="match status" value="1"/>
</dbReference>
<dbReference type="HAMAP" id="MF_00435">
    <property type="entry name" value="IlvC"/>
    <property type="match status" value="1"/>
</dbReference>
<dbReference type="InterPro" id="IPR008927">
    <property type="entry name" value="6-PGluconate_DH-like_C_sf"/>
</dbReference>
<dbReference type="InterPro" id="IPR013023">
    <property type="entry name" value="KARI"/>
</dbReference>
<dbReference type="InterPro" id="IPR000506">
    <property type="entry name" value="KARI_C"/>
</dbReference>
<dbReference type="InterPro" id="IPR013116">
    <property type="entry name" value="KARI_N"/>
</dbReference>
<dbReference type="InterPro" id="IPR014359">
    <property type="entry name" value="KARI_prok"/>
</dbReference>
<dbReference type="InterPro" id="IPR036291">
    <property type="entry name" value="NAD(P)-bd_dom_sf"/>
</dbReference>
<dbReference type="NCBIfam" id="TIGR00465">
    <property type="entry name" value="ilvC"/>
    <property type="match status" value="1"/>
</dbReference>
<dbReference type="NCBIfam" id="NF004017">
    <property type="entry name" value="PRK05479.1"/>
    <property type="match status" value="1"/>
</dbReference>
<dbReference type="NCBIfam" id="NF009940">
    <property type="entry name" value="PRK13403.1"/>
    <property type="match status" value="1"/>
</dbReference>
<dbReference type="PANTHER" id="PTHR21371">
    <property type="entry name" value="KETOL-ACID REDUCTOISOMERASE, MITOCHONDRIAL"/>
    <property type="match status" value="1"/>
</dbReference>
<dbReference type="PANTHER" id="PTHR21371:SF1">
    <property type="entry name" value="KETOL-ACID REDUCTOISOMERASE, MITOCHONDRIAL"/>
    <property type="match status" value="1"/>
</dbReference>
<dbReference type="Pfam" id="PF01450">
    <property type="entry name" value="KARI_C"/>
    <property type="match status" value="1"/>
</dbReference>
<dbReference type="Pfam" id="PF07991">
    <property type="entry name" value="KARI_N"/>
    <property type="match status" value="1"/>
</dbReference>
<dbReference type="PIRSF" id="PIRSF000116">
    <property type="entry name" value="IlvC_gammaproteo"/>
    <property type="match status" value="1"/>
</dbReference>
<dbReference type="SUPFAM" id="SSF48179">
    <property type="entry name" value="6-phosphogluconate dehydrogenase C-terminal domain-like"/>
    <property type="match status" value="1"/>
</dbReference>
<dbReference type="SUPFAM" id="SSF51735">
    <property type="entry name" value="NAD(P)-binding Rossmann-fold domains"/>
    <property type="match status" value="1"/>
</dbReference>
<dbReference type="PROSITE" id="PS51851">
    <property type="entry name" value="KARI_C"/>
    <property type="match status" value="1"/>
</dbReference>
<dbReference type="PROSITE" id="PS51850">
    <property type="entry name" value="KARI_N"/>
    <property type="match status" value="1"/>
</dbReference>
<sequence>MAKIYYDEDASLDILKDKVIAILGYGSQGHAHALNLRDSGLNVIIGLHEGSRSREKAKADGFEVYTPREAAKRADIIMFLIPDTVQPEVYKNEVEPELNSSKTLAFAHGFNIHFRQIVPPKDVDVFMVAPKGPGHLVRWMYTEGKGVPALVAIHQDASGTCKDKALAYAKGIGATRAGVIETTFKEETETDLFGEQMVLCGGVTALIKAGFETLVNAGYQPEVAYFECLHELKLIVDLIYEHGISGMRYSISDTAKYGDVTRGERIYKVVKPVMEKTLEEIQKGEFAREWILENKAGRPVYYALLERDREHLVEKVGEELRKMMPWLGKKELK</sequence>